<name>PELP1_MOUSE</name>
<comment type="function">
    <text evidence="1 4">Coactivator of estrogen receptor-mediated transcription and a corepressor of other nuclear hormone receptors and sequence-specific transcription factors. Plays a role in estrogen receptor (ER) genomic activity when present in the nuclear compartment by activating the ER target genes in a hormonal stimulation dependent manner. Can facilitate ER non-genomic signaling via SRC and PI3K interaction in the cytosol. Plays a role in E2-mediated cell cycle progression by interacting with RB1. May have important functional implications in ER/growth factor cross-talk. Interacts with several growth factor signaling components including EGFR and HRS. Functions as the key stabilizing component of the Five Friends of Methylated CHTOP (5FMC) complex; the 5FMC complex is recruited to ZNF148 by methylated CHTOP, leading to desumoylation of ZNF148 and subsequent transactivation of ZNF148 target genes (PubMed:22872859). Component of the PELP1 complex involved in the nucleolar steps of 28S rRNA maturation and the subsequent nucleoplasmic transit of the pre-60S ribosomal subunit. Regulates pre-60S association of the critical remodeling factor MDN1 (By similarity).</text>
</comment>
<comment type="subunit">
    <text evidence="1 4">Interacts with HRS, RXRA, SUMO2, HDAC2, RB1 and STAT3. Interacts with PI3K, SRC and EGFR in cytoplasm. Interacts with ESR1, the interaction is enhanced by 17-beta-estradiol; the interaction increases ESR1 transcriptional activity (By similarity). Interacts with CREBBP and EP300 in a ligand-dependent manner (By similarity). Forms two complexes in the presence of 17-beta-estradiol; one with SRC and ESR1 and another with LCK and ESR1. Interacts with histone H1 and H3 with a greater affinity for H1. Component of some MLL1/MLL complex, at least composed of the core components KMT2A/MLL1, ASH2L, HCFC1/HCF1, WDR5 and RBBP5, as well as the facultative components BACC1, CHD8, E2F6, HSP70, INO80C, KANSL1, LAS1L, MAX, MCRS1, MGA, KAT8/MOF, PELP1, PHF20, PRP31, RING2, RUVB1/TIP49A, RUVB2/TIP49B, SENP3, TAF1, TAF4, TAF6, TAF7, TAF9 and TEX10 (By similarity). Core component of the 5FMC complex, at least composed of PELP1, LAS1L, TEX10, WDR18 and SENP3; the complex interacts with methylated CHTOP and ZNF148. Interacts with NOL9 (PubMed:22872859). Interacts with BCAS3 (By similarity). Component of the PELP1 complex, composed of at least PELP1, TEX10 and WDR18. The complex interacts (via PELP1) with MDN1 (via its hexameric AAA ATPase ring) and the pre-60S ribosome particles (By similarity).</text>
</comment>
<comment type="interaction">
    <interactant intactId="EBI-6909114">
        <id>Q9DBD5</id>
    </interactant>
    <interactant intactId="EBI-10896863">
        <id>P12813</id>
        <label>Nr4a1</label>
    </interactant>
    <organismsDiffer>false</organismsDiffer>
    <experiments>3</experiments>
</comment>
<comment type="subcellular location">
    <subcellularLocation>
        <location evidence="1">Nucleus</location>
        <location evidence="1">Nucleolus</location>
    </subcellularLocation>
    <subcellularLocation>
        <location evidence="4">Nucleus</location>
        <location evidence="4">Nucleoplasm</location>
    </subcellularLocation>
    <subcellularLocation>
        <location evidence="3 4">Nucleus</location>
    </subcellularLocation>
    <subcellularLocation>
        <location evidence="3 4">Cytoplasm</location>
    </subcellularLocation>
    <text evidence="4">Mainly found in the nucleoplasm, with low levels detected in the cytoplasm. Also found associated with the plasma membrane.</text>
</comment>
<comment type="tissue specificity">
    <text evidence="3">Widely expressed with high levels in testis, ovary, uterus and pituitary gland.</text>
</comment>
<comment type="domain">
    <text evidence="1">The Glu-rich region mediates histones interaction.</text>
</comment>
<comment type="domain">
    <text evidence="1">The Leu-Xaa-Xaa-Leu-Leu (LXXLL) motifs are required for the association with nuclear receptor ESR1.</text>
</comment>
<comment type="PTM">
    <text evidence="1">Transiently sumoylated, preferentially conjugated to SUMO2 or SUMO3. Sumoylation causes nucleolar exclusion of PELP1 and promotes the recruitment of MDN1 to pre-60S particles. Desumoylation by SUMO isopeptidase SENP3 is needed to release both PELP1 and MDN1 from pre-ribosomes.</text>
</comment>
<comment type="similarity">
    <text evidence="5">Belongs to the RIX1/PELP1 family.</text>
</comment>
<keyword id="KW-0007">Acetylation</keyword>
<keyword id="KW-0010">Activator</keyword>
<keyword id="KW-0963">Cytoplasm</keyword>
<keyword id="KW-0539">Nucleus</keyword>
<keyword id="KW-0597">Phosphoprotein</keyword>
<keyword id="KW-1185">Reference proteome</keyword>
<keyword id="KW-0677">Repeat</keyword>
<keyword id="KW-0678">Repressor</keyword>
<keyword id="KW-0804">Transcription</keyword>
<keyword id="KW-0832">Ubl conjugation</keyword>
<organism>
    <name type="scientific">Mus musculus</name>
    <name type="common">Mouse</name>
    <dbReference type="NCBI Taxonomy" id="10090"/>
    <lineage>
        <taxon>Eukaryota</taxon>
        <taxon>Metazoa</taxon>
        <taxon>Chordata</taxon>
        <taxon>Craniata</taxon>
        <taxon>Vertebrata</taxon>
        <taxon>Euteleostomi</taxon>
        <taxon>Mammalia</taxon>
        <taxon>Eutheria</taxon>
        <taxon>Euarchontoglires</taxon>
        <taxon>Glires</taxon>
        <taxon>Rodentia</taxon>
        <taxon>Myomorpha</taxon>
        <taxon>Muroidea</taxon>
        <taxon>Muridae</taxon>
        <taxon>Murinae</taxon>
        <taxon>Mus</taxon>
        <taxon>Mus</taxon>
    </lineage>
</organism>
<evidence type="ECO:0000250" key="1">
    <source>
        <dbReference type="UniProtKB" id="Q8IZL8"/>
    </source>
</evidence>
<evidence type="ECO:0000256" key="2">
    <source>
        <dbReference type="SAM" id="MobiDB-lite"/>
    </source>
</evidence>
<evidence type="ECO:0000269" key="3">
    <source>
    </source>
</evidence>
<evidence type="ECO:0000269" key="4">
    <source>
    </source>
</evidence>
<evidence type="ECO:0000305" key="5"/>
<evidence type="ECO:0007744" key="6">
    <source>
    </source>
</evidence>
<evidence type="ECO:0007744" key="7">
    <source>
    </source>
</evidence>
<reference key="1">
    <citation type="journal article" date="2005" name="Science">
        <title>The transcriptional landscape of the mammalian genome.</title>
        <authorList>
            <person name="Carninci P."/>
            <person name="Kasukawa T."/>
            <person name="Katayama S."/>
            <person name="Gough J."/>
            <person name="Frith M.C."/>
            <person name="Maeda N."/>
            <person name="Oyama R."/>
            <person name="Ravasi T."/>
            <person name="Lenhard B."/>
            <person name="Wells C."/>
            <person name="Kodzius R."/>
            <person name="Shimokawa K."/>
            <person name="Bajic V.B."/>
            <person name="Brenner S.E."/>
            <person name="Batalov S."/>
            <person name="Forrest A.R."/>
            <person name="Zavolan M."/>
            <person name="Davis M.J."/>
            <person name="Wilming L.G."/>
            <person name="Aidinis V."/>
            <person name="Allen J.E."/>
            <person name="Ambesi-Impiombato A."/>
            <person name="Apweiler R."/>
            <person name="Aturaliya R.N."/>
            <person name="Bailey T.L."/>
            <person name="Bansal M."/>
            <person name="Baxter L."/>
            <person name="Beisel K.W."/>
            <person name="Bersano T."/>
            <person name="Bono H."/>
            <person name="Chalk A.M."/>
            <person name="Chiu K.P."/>
            <person name="Choudhary V."/>
            <person name="Christoffels A."/>
            <person name="Clutterbuck D.R."/>
            <person name="Crowe M.L."/>
            <person name="Dalla E."/>
            <person name="Dalrymple B.P."/>
            <person name="de Bono B."/>
            <person name="Della Gatta G."/>
            <person name="di Bernardo D."/>
            <person name="Down T."/>
            <person name="Engstrom P."/>
            <person name="Fagiolini M."/>
            <person name="Faulkner G."/>
            <person name="Fletcher C.F."/>
            <person name="Fukushima T."/>
            <person name="Furuno M."/>
            <person name="Futaki S."/>
            <person name="Gariboldi M."/>
            <person name="Georgii-Hemming P."/>
            <person name="Gingeras T.R."/>
            <person name="Gojobori T."/>
            <person name="Green R.E."/>
            <person name="Gustincich S."/>
            <person name="Harbers M."/>
            <person name="Hayashi Y."/>
            <person name="Hensch T.K."/>
            <person name="Hirokawa N."/>
            <person name="Hill D."/>
            <person name="Huminiecki L."/>
            <person name="Iacono M."/>
            <person name="Ikeo K."/>
            <person name="Iwama A."/>
            <person name="Ishikawa T."/>
            <person name="Jakt M."/>
            <person name="Kanapin A."/>
            <person name="Katoh M."/>
            <person name="Kawasawa Y."/>
            <person name="Kelso J."/>
            <person name="Kitamura H."/>
            <person name="Kitano H."/>
            <person name="Kollias G."/>
            <person name="Krishnan S.P."/>
            <person name="Kruger A."/>
            <person name="Kummerfeld S.K."/>
            <person name="Kurochkin I.V."/>
            <person name="Lareau L.F."/>
            <person name="Lazarevic D."/>
            <person name="Lipovich L."/>
            <person name="Liu J."/>
            <person name="Liuni S."/>
            <person name="McWilliam S."/>
            <person name="Madan Babu M."/>
            <person name="Madera M."/>
            <person name="Marchionni L."/>
            <person name="Matsuda H."/>
            <person name="Matsuzawa S."/>
            <person name="Miki H."/>
            <person name="Mignone F."/>
            <person name="Miyake S."/>
            <person name="Morris K."/>
            <person name="Mottagui-Tabar S."/>
            <person name="Mulder N."/>
            <person name="Nakano N."/>
            <person name="Nakauchi H."/>
            <person name="Ng P."/>
            <person name="Nilsson R."/>
            <person name="Nishiguchi S."/>
            <person name="Nishikawa S."/>
            <person name="Nori F."/>
            <person name="Ohara O."/>
            <person name="Okazaki Y."/>
            <person name="Orlando V."/>
            <person name="Pang K.C."/>
            <person name="Pavan W.J."/>
            <person name="Pavesi G."/>
            <person name="Pesole G."/>
            <person name="Petrovsky N."/>
            <person name="Piazza S."/>
            <person name="Reed J."/>
            <person name="Reid J.F."/>
            <person name="Ring B.Z."/>
            <person name="Ringwald M."/>
            <person name="Rost B."/>
            <person name="Ruan Y."/>
            <person name="Salzberg S.L."/>
            <person name="Sandelin A."/>
            <person name="Schneider C."/>
            <person name="Schoenbach C."/>
            <person name="Sekiguchi K."/>
            <person name="Semple C.A."/>
            <person name="Seno S."/>
            <person name="Sessa L."/>
            <person name="Sheng Y."/>
            <person name="Shibata Y."/>
            <person name="Shimada H."/>
            <person name="Shimada K."/>
            <person name="Silva D."/>
            <person name="Sinclair B."/>
            <person name="Sperling S."/>
            <person name="Stupka E."/>
            <person name="Sugiura K."/>
            <person name="Sultana R."/>
            <person name="Takenaka Y."/>
            <person name="Taki K."/>
            <person name="Tammoja K."/>
            <person name="Tan S.L."/>
            <person name="Tang S."/>
            <person name="Taylor M.S."/>
            <person name="Tegner J."/>
            <person name="Teichmann S.A."/>
            <person name="Ueda H.R."/>
            <person name="van Nimwegen E."/>
            <person name="Verardo R."/>
            <person name="Wei C.L."/>
            <person name="Yagi K."/>
            <person name="Yamanishi H."/>
            <person name="Zabarovsky E."/>
            <person name="Zhu S."/>
            <person name="Zimmer A."/>
            <person name="Hide W."/>
            <person name="Bult C."/>
            <person name="Grimmond S.M."/>
            <person name="Teasdale R.D."/>
            <person name="Liu E.T."/>
            <person name="Brusic V."/>
            <person name="Quackenbush J."/>
            <person name="Wahlestedt C."/>
            <person name="Mattick J.S."/>
            <person name="Hume D.A."/>
            <person name="Kai C."/>
            <person name="Sasaki D."/>
            <person name="Tomaru Y."/>
            <person name="Fukuda S."/>
            <person name="Kanamori-Katayama M."/>
            <person name="Suzuki M."/>
            <person name="Aoki J."/>
            <person name="Arakawa T."/>
            <person name="Iida J."/>
            <person name="Imamura K."/>
            <person name="Itoh M."/>
            <person name="Kato T."/>
            <person name="Kawaji H."/>
            <person name="Kawagashira N."/>
            <person name="Kawashima T."/>
            <person name="Kojima M."/>
            <person name="Kondo S."/>
            <person name="Konno H."/>
            <person name="Nakano K."/>
            <person name="Ninomiya N."/>
            <person name="Nishio T."/>
            <person name="Okada M."/>
            <person name="Plessy C."/>
            <person name="Shibata K."/>
            <person name="Shiraki T."/>
            <person name="Suzuki S."/>
            <person name="Tagami M."/>
            <person name="Waki K."/>
            <person name="Watahiki A."/>
            <person name="Okamura-Oho Y."/>
            <person name="Suzuki H."/>
            <person name="Kawai J."/>
            <person name="Hayashizaki Y."/>
        </authorList>
    </citation>
    <scope>NUCLEOTIDE SEQUENCE [LARGE SCALE MRNA]</scope>
    <source>
        <strain>C57BL/6J</strain>
        <tissue>Liver</tissue>
    </source>
</reference>
<reference key="2">
    <citation type="journal article" date="2009" name="PLoS Biol.">
        <title>Lineage-specific biology revealed by a finished genome assembly of the mouse.</title>
        <authorList>
            <person name="Church D.M."/>
            <person name="Goodstadt L."/>
            <person name="Hillier L.W."/>
            <person name="Zody M.C."/>
            <person name="Goldstein S."/>
            <person name="She X."/>
            <person name="Bult C.J."/>
            <person name="Agarwala R."/>
            <person name="Cherry J.L."/>
            <person name="DiCuccio M."/>
            <person name="Hlavina W."/>
            <person name="Kapustin Y."/>
            <person name="Meric P."/>
            <person name="Maglott D."/>
            <person name="Birtle Z."/>
            <person name="Marques A.C."/>
            <person name="Graves T."/>
            <person name="Zhou S."/>
            <person name="Teague B."/>
            <person name="Potamousis K."/>
            <person name="Churas C."/>
            <person name="Place M."/>
            <person name="Herschleb J."/>
            <person name="Runnheim R."/>
            <person name="Forrest D."/>
            <person name="Amos-Landgraf J."/>
            <person name="Schwartz D.C."/>
            <person name="Cheng Z."/>
            <person name="Lindblad-Toh K."/>
            <person name="Eichler E.E."/>
            <person name="Ponting C.P."/>
        </authorList>
    </citation>
    <scope>NUCLEOTIDE SEQUENCE [LARGE SCALE GENOMIC DNA]</scope>
    <source>
        <strain>C57BL/6J</strain>
    </source>
</reference>
<reference key="3">
    <citation type="journal article" date="2004" name="Genome Res.">
        <title>The status, quality, and expansion of the NIH full-length cDNA project: the Mammalian Gene Collection (MGC).</title>
        <authorList>
            <consortium name="The MGC Project Team"/>
        </authorList>
    </citation>
    <scope>NUCLEOTIDE SEQUENCE [LARGE SCALE MRNA]</scope>
    <source>
        <strain>C57BL/6J</strain>
        <strain>FVB/N</strain>
        <tissue>Embryonic brain</tissue>
        <tissue>Liver</tissue>
        <tissue>Mammary gland</tissue>
    </source>
</reference>
<reference key="4">
    <citation type="journal article" date="2001" name="J. Biol. Chem.">
        <title>Molecular cloning and characterization of PELP1, a novel human coregulator of estrogen receptor alpha.</title>
        <authorList>
            <person name="Vadlamudi R.K."/>
            <person name="Wang R.-A."/>
            <person name="Mazumdar A."/>
            <person name="Kim Y.-S."/>
            <person name="Shin J."/>
            <person name="Sahin A."/>
            <person name="Kumar R."/>
        </authorList>
    </citation>
    <scope>SUBCELLULAR LOCATION</scope>
    <scope>TISSUE SPECIFICITY</scope>
</reference>
<reference key="5">
    <citation type="journal article" date="2004" name="Mol. Cell. Proteomics">
        <title>Phosphoproteomic analysis of the developing mouse brain.</title>
        <authorList>
            <person name="Ballif B.A."/>
            <person name="Villen J."/>
            <person name="Beausoleil S.A."/>
            <person name="Schwartz D."/>
            <person name="Gygi S.P."/>
        </authorList>
    </citation>
    <scope>IDENTIFICATION BY MASS SPECTROMETRY [LARGE SCALE ANALYSIS]</scope>
    <source>
        <tissue>Embryonic brain</tissue>
    </source>
</reference>
<reference key="6">
    <citation type="journal article" date="2009" name="Mol. Cell. Proteomics">
        <title>Large scale localization of protein phosphorylation by use of electron capture dissociation mass spectrometry.</title>
        <authorList>
            <person name="Sweet S.M."/>
            <person name="Bailey C.M."/>
            <person name="Cunningham D.L."/>
            <person name="Heath J.K."/>
            <person name="Cooper H.J."/>
        </authorList>
    </citation>
    <scope>ACETYLATION [LARGE SCALE ANALYSIS] AT ALA-2</scope>
    <scope>PHOSPHORYLATION [LARGE SCALE ANALYSIS] AT SER-13</scope>
    <scope>CLEAVAGE OF INITIATOR METHIONINE [LARGE SCALE ANALYSIS]</scope>
    <scope>IDENTIFICATION BY MASS SPECTROMETRY [LARGE SCALE ANALYSIS]</scope>
    <source>
        <tissue>Embryonic fibroblast</tissue>
    </source>
</reference>
<reference key="7">
    <citation type="journal article" date="2010" name="Cell">
        <title>A tissue-specific atlas of mouse protein phosphorylation and expression.</title>
        <authorList>
            <person name="Huttlin E.L."/>
            <person name="Jedrychowski M.P."/>
            <person name="Elias J.E."/>
            <person name="Goswami T."/>
            <person name="Rad R."/>
            <person name="Beausoleil S.A."/>
            <person name="Villen J."/>
            <person name="Haas W."/>
            <person name="Sowa M.E."/>
            <person name="Gygi S.P."/>
        </authorList>
    </citation>
    <scope>PHOSPHORYLATION [LARGE SCALE ANALYSIS] AT SER-755</scope>
    <scope>IDENTIFICATION BY MASS SPECTROMETRY [LARGE SCALE ANALYSIS]</scope>
    <source>
        <tissue>Brain</tissue>
        <tissue>Heart</tissue>
        <tissue>Kidney</tissue>
        <tissue>Pancreas</tissue>
        <tissue>Spleen</tissue>
        <tissue>Testis</tissue>
    </source>
</reference>
<reference key="8">
    <citation type="journal article" date="2012" name="Mol. Cell. Proteomics">
        <title>Five friends of methylated chromatin target of protein-arginine-methyltransferase[prmt]-1 (chtop), a complex linking arginine methylation to desumoylation.</title>
        <authorList>
            <person name="Fanis P."/>
            <person name="Gillemans N."/>
            <person name="Aghajanirefah A."/>
            <person name="Pourfarzad F."/>
            <person name="Demmers J."/>
            <person name="Esteghamat F."/>
            <person name="Vadlamudi R.K."/>
            <person name="Grosveld F."/>
            <person name="Philipsen S."/>
            <person name="van Dijk T.B."/>
        </authorList>
    </citation>
    <scope>FUNCTION</scope>
    <scope>IDENTIFICATION IN THE 5FMC COMPLEX</scope>
    <scope>INTERACTION OF THE 5FMC COMPLEX WITH CHTOP AND ZNF148</scope>
    <scope>INTERACTION WITH NOL9</scope>
    <scope>SUBCELLULAR LOCATION</scope>
</reference>
<accession>Q9DBD5</accession>
<accession>Q5F2E2</accession>
<accession>Q6PEM0</accession>
<accession>Q91YM9</accession>
<sequence length="1123" mass="118069">MAAAVLSGASAGSPAGAPGGPGGLSAVGSGPRLRLLLLESISGLLQPRTASPVAPVHPPIQWAPHLPGLMCLLRLHGTAGGAQNLSALGALVNLSNAHLGSIKTRFEGLCLLSLLIGESPTELFQQHCVSWLRSIQQVLQSQDSPSTMELAVAVLRDLLRHASQLPTLFRDISTNHLPGLLTSLLGLRPECEQSALEGMKACVTYFPRACGSLKGKLASFFLSRLDSLNPQLQQLACECYSRLPSLGAGFSQGLKHTENWEQELHSLLTSLHSLLGSLFEETEPAPVQSEGPGIEMLLSHSEDGNTHVLLQLRQRFSGLARCLGLMLSSEFGAPVSVPVQEILDLICRILGISSKNINLLGDGPLRLLLLPSLHLEALDLLSALILACGSRLLRFGALISRLLPQVLNAWSTGRDTLAPGQERPYSTIRTKVYAILELWVQVCGASAGMLQGGASGEALLTHLLSDISPPADALKLCSTRGSSDGGLQSGKPSAPKKLKLDMGEALAPPSQRKGDRNANSDVCAAALRGLSRTILMCGPLIKEETHRRLHDLVLPLVMSVQQGEVLGSSPYNSSCCRLGLYRLLLALLLAPSPRCPPPLACALKAFSLGQWEDSLEVSSFCSEALVTCAALTHPRVPPLQSSGPACPTPAPVPPPEAPSSFRAPAFHPPGPMPSIGAVPSTGPLPSAGPIPTVGSMASTGQVPSRPGPPATANHLGLSVPGLVSVPPRLLPGPENHRAGSGEDPVLAPSGTPPPSIPPDETFGGRVPRPAFVHYDKEEASDVEISLESDSDDSVVIVPEGLPSLPPAPPSGTPPPAAPAGPPTASPPVPAKEDSEELPATPGPPPPPPPPPPPASGPVTLPPPQLVPEGTPGGGGPTAMEEDLTVININSSDEEEEEEEEEEEEDEDEEEEDFEEEEEDEEEYFEEEEEEEEFEEEFEEEEGELEEEEEEEEEELDEVEDVEFGSAGEVEEGGPPPPTLPPALPPSDSPKVQPEAEPEPGLLLEVEEPGPEEVPGPETAPTLAPEVLPSQEEGEQEVGSPAAGPPQELVEESSAPPALLEEGTEGGGDKVPPPPETPAEEMETEAEVPAPQEKEQDDTAAMLADFIDCPPDDEKPPPATEPDS</sequence>
<protein>
    <recommendedName>
        <fullName>Proline-, glutamic acid- and leucine-rich protein 1</fullName>
    </recommendedName>
    <alternativeName>
        <fullName>Modulator of non-genomic activity of estrogen receptor</fullName>
    </alternativeName>
</protein>
<gene>
    <name type="primary">Pelp1</name>
    <name type="synonym">Mnar</name>
</gene>
<proteinExistence type="evidence at protein level"/>
<dbReference type="EMBL" id="AK005027">
    <property type="protein sequence ID" value="BAB23754.1"/>
    <property type="molecule type" value="mRNA"/>
</dbReference>
<dbReference type="EMBL" id="AL596096">
    <property type="status" value="NOT_ANNOTATED_CDS"/>
    <property type="molecule type" value="Genomic_DNA"/>
</dbReference>
<dbReference type="EMBL" id="BC016444">
    <property type="protein sequence ID" value="AAH16444.1"/>
    <property type="molecule type" value="mRNA"/>
</dbReference>
<dbReference type="EMBL" id="BC057987">
    <property type="protein sequence ID" value="AAH57987.1"/>
    <property type="molecule type" value="mRNA"/>
</dbReference>
<dbReference type="EMBL" id="BC090620">
    <property type="protein sequence ID" value="AAH90620.1"/>
    <property type="molecule type" value="mRNA"/>
</dbReference>
<dbReference type="CCDS" id="CCDS24945.1"/>
<dbReference type="RefSeq" id="NP_083507.3">
    <property type="nucleotide sequence ID" value="NM_029231.4"/>
</dbReference>
<dbReference type="SMR" id="Q9DBD5"/>
<dbReference type="BioGRID" id="217350">
    <property type="interactions" value="17"/>
</dbReference>
<dbReference type="FunCoup" id="Q9DBD5">
    <property type="interactions" value="3067"/>
</dbReference>
<dbReference type="IntAct" id="Q9DBD5">
    <property type="interactions" value="3"/>
</dbReference>
<dbReference type="STRING" id="10090.ENSMUSP00000019065"/>
<dbReference type="GlyGen" id="Q9DBD5">
    <property type="glycosylation" value="7 sites"/>
</dbReference>
<dbReference type="iPTMnet" id="Q9DBD5"/>
<dbReference type="PhosphoSitePlus" id="Q9DBD5"/>
<dbReference type="jPOST" id="Q9DBD5"/>
<dbReference type="PaxDb" id="10090-ENSMUSP00000019065"/>
<dbReference type="PeptideAtlas" id="Q9DBD5"/>
<dbReference type="ProteomicsDB" id="289347"/>
<dbReference type="Pumba" id="Q9DBD5"/>
<dbReference type="Antibodypedia" id="23315">
    <property type="antibodies" value="294 antibodies from 33 providers"/>
</dbReference>
<dbReference type="DNASU" id="75273"/>
<dbReference type="Ensembl" id="ENSMUST00000019065.10">
    <property type="protein sequence ID" value="ENSMUSP00000019065.4"/>
    <property type="gene ID" value="ENSMUSG00000018921.12"/>
</dbReference>
<dbReference type="GeneID" id="75273"/>
<dbReference type="KEGG" id="mmu:75273"/>
<dbReference type="UCSC" id="uc007jup.2">
    <property type="organism name" value="mouse"/>
</dbReference>
<dbReference type="AGR" id="MGI:1922523"/>
<dbReference type="CTD" id="27043"/>
<dbReference type="MGI" id="MGI:1922523">
    <property type="gene designation" value="Pelp1"/>
</dbReference>
<dbReference type="VEuPathDB" id="HostDB:ENSMUSG00000018921"/>
<dbReference type="eggNOG" id="ENOG502QQE7">
    <property type="taxonomic scope" value="Eukaryota"/>
</dbReference>
<dbReference type="GeneTree" id="ENSGT00730000111225"/>
<dbReference type="HOGENOM" id="CLU_007599_0_0_1"/>
<dbReference type="InParanoid" id="Q9DBD5"/>
<dbReference type="OMA" id="DFIACPP"/>
<dbReference type="OrthoDB" id="20900at2759"/>
<dbReference type="PhylomeDB" id="Q9DBD5"/>
<dbReference type="TreeFam" id="TF331332"/>
<dbReference type="Reactome" id="R-MMU-6791226">
    <property type="pathway name" value="Major pathway of rRNA processing in the nucleolus and cytosol"/>
</dbReference>
<dbReference type="BioGRID-ORCS" id="75273">
    <property type="hits" value="29 hits in 80 CRISPR screens"/>
</dbReference>
<dbReference type="ChiTaRS" id="Pelp1">
    <property type="organism name" value="mouse"/>
</dbReference>
<dbReference type="PRO" id="PR:Q9DBD5"/>
<dbReference type="Proteomes" id="UP000000589">
    <property type="component" value="Chromosome 11"/>
</dbReference>
<dbReference type="RNAct" id="Q9DBD5">
    <property type="molecule type" value="protein"/>
</dbReference>
<dbReference type="Bgee" id="ENSMUSG00000018921">
    <property type="expression patterns" value="Expressed in ear vesicle and 257 other cell types or tissues"/>
</dbReference>
<dbReference type="ExpressionAtlas" id="Q9DBD5">
    <property type="expression patterns" value="baseline and differential"/>
</dbReference>
<dbReference type="GO" id="GO:0005737">
    <property type="term" value="C:cytoplasm"/>
    <property type="evidence" value="ECO:0007669"/>
    <property type="project" value="UniProtKB-SubCell"/>
</dbReference>
<dbReference type="GO" id="GO:0000791">
    <property type="term" value="C:euchromatin"/>
    <property type="evidence" value="ECO:0000250"/>
    <property type="project" value="UniProtKB"/>
</dbReference>
<dbReference type="GO" id="GO:0071339">
    <property type="term" value="C:MLL1 complex"/>
    <property type="evidence" value="ECO:0000250"/>
    <property type="project" value="UniProtKB"/>
</dbReference>
<dbReference type="GO" id="GO:0005730">
    <property type="term" value="C:nucleolus"/>
    <property type="evidence" value="ECO:0007669"/>
    <property type="project" value="UniProtKB-SubCell"/>
</dbReference>
<dbReference type="GO" id="GO:0003682">
    <property type="term" value="F:chromatin binding"/>
    <property type="evidence" value="ECO:0000250"/>
    <property type="project" value="UniProtKB"/>
</dbReference>
<dbReference type="GO" id="GO:0032183">
    <property type="term" value="F:SUMO binding"/>
    <property type="evidence" value="ECO:0007669"/>
    <property type="project" value="Ensembl"/>
</dbReference>
<dbReference type="GO" id="GO:0071391">
    <property type="term" value="P:cellular response to estrogen stimulus"/>
    <property type="evidence" value="ECO:0000250"/>
    <property type="project" value="UniProtKB"/>
</dbReference>
<dbReference type="GO" id="GO:0045944">
    <property type="term" value="P:positive regulation of transcription by RNA polymerase II"/>
    <property type="evidence" value="ECO:0000250"/>
    <property type="project" value="UniProtKB"/>
</dbReference>
<dbReference type="FunFam" id="1.25.10.10:FF:001118">
    <property type="entry name" value="Proline-, glutamic acid- and leucine-rich protein 1"/>
    <property type="match status" value="1"/>
</dbReference>
<dbReference type="Gene3D" id="1.25.10.10">
    <property type="entry name" value="Leucine-rich Repeat Variant"/>
    <property type="match status" value="1"/>
</dbReference>
<dbReference type="InterPro" id="IPR011989">
    <property type="entry name" value="ARM-like"/>
</dbReference>
<dbReference type="InterPro" id="IPR016024">
    <property type="entry name" value="ARM-type_fold"/>
</dbReference>
<dbReference type="InterPro" id="IPR012980">
    <property type="entry name" value="PELP1_middle"/>
</dbReference>
<dbReference type="InterPro" id="IPR012583">
    <property type="entry name" value="RIX1_N"/>
</dbReference>
<dbReference type="PANTHER" id="PTHR34105">
    <property type="entry name" value="PROLINE-, GLUTAMIC ACID- AND LEUCINE-RICH PROTEIN 1"/>
    <property type="match status" value="1"/>
</dbReference>
<dbReference type="PANTHER" id="PTHR34105:SF1">
    <property type="entry name" value="PROLINE-, GLUTAMIC ACID- AND LEUCINE-RICH PROTEIN 1"/>
    <property type="match status" value="1"/>
</dbReference>
<dbReference type="Pfam" id="PF08166">
    <property type="entry name" value="PELP1_HEAT"/>
    <property type="match status" value="2"/>
</dbReference>
<dbReference type="Pfam" id="PF08167">
    <property type="entry name" value="RIX1"/>
    <property type="match status" value="1"/>
</dbReference>
<dbReference type="PRINTS" id="PR01217">
    <property type="entry name" value="PRICHEXTENSN"/>
</dbReference>
<dbReference type="SUPFAM" id="SSF48371">
    <property type="entry name" value="ARM repeat"/>
    <property type="match status" value="1"/>
</dbReference>
<feature type="initiator methionine" description="Removed" evidence="6">
    <location>
        <position position="1"/>
    </location>
</feature>
<feature type="chain" id="PRO_0000252137" description="Proline-, glutamic acid- and leucine-rich protein 1">
    <location>
        <begin position="2"/>
        <end position="1123"/>
    </location>
</feature>
<feature type="region of interest" description="Required for modulation of ESR1 transcriptional activity" evidence="1">
    <location>
        <begin position="2"/>
        <end position="80"/>
    </location>
</feature>
<feature type="region of interest" description="Required for modulation of ESR1 transcriptional activity" evidence="1">
    <location>
        <begin position="121"/>
        <end position="189"/>
    </location>
</feature>
<feature type="region of interest" description="Disordered" evidence="2">
    <location>
        <begin position="639"/>
        <end position="767"/>
    </location>
</feature>
<feature type="region of interest" description="Disordered" evidence="2">
    <location>
        <begin position="779"/>
        <end position="1123"/>
    </location>
</feature>
<feature type="short sequence motif" description="LXXLL motif 1">
    <location>
        <begin position="33"/>
        <end position="37"/>
    </location>
</feature>
<feature type="short sequence motif" description="LXXLL motif 2">
    <location>
        <begin position="69"/>
        <end position="73"/>
    </location>
</feature>
<feature type="short sequence motif" description="LXXLL motif 3">
    <location>
        <begin position="111"/>
        <end position="115"/>
    </location>
</feature>
<feature type="short sequence motif" description="LXXLL motif 4">
    <location>
        <begin position="155"/>
        <end position="159"/>
    </location>
</feature>
<feature type="short sequence motif" description="LXXLL motif 5">
    <location>
        <begin position="177"/>
        <end position="181"/>
    </location>
</feature>
<feature type="short sequence motif" description="LXXLL motif 6">
    <location>
        <begin position="264"/>
        <end position="268"/>
    </location>
</feature>
<feature type="short sequence motif" description="LXXLL motif 7">
    <location>
        <begin position="271"/>
        <end position="275"/>
    </location>
</feature>
<feature type="short sequence motif" description="LXXLL motif 8">
    <location>
        <begin position="365"/>
        <end position="369"/>
    </location>
</feature>
<feature type="short sequence motif" description="LXXLL motif 9">
    <location>
        <begin position="460"/>
        <end position="464"/>
    </location>
</feature>
<feature type="short sequence motif" description="LXXLL motif 10">
    <location>
        <begin position="580"/>
        <end position="584"/>
    </location>
</feature>
<feature type="short sequence motif" description="LXXLL motif 11">
    <location>
        <begin position="585"/>
        <end position="589"/>
    </location>
</feature>
<feature type="compositionally biased region" description="Pro residues" evidence="2">
    <location>
        <begin position="646"/>
        <end position="657"/>
    </location>
</feature>
<feature type="compositionally biased region" description="Acidic residues" evidence="2">
    <location>
        <begin position="780"/>
        <end position="792"/>
    </location>
</feature>
<feature type="compositionally biased region" description="Pro residues" evidence="2">
    <location>
        <begin position="803"/>
        <end position="829"/>
    </location>
</feature>
<feature type="compositionally biased region" description="Pro residues" evidence="2">
    <location>
        <begin position="840"/>
        <end position="865"/>
    </location>
</feature>
<feature type="compositionally biased region" description="Acidic residues" evidence="2">
    <location>
        <begin position="891"/>
        <end position="962"/>
    </location>
</feature>
<feature type="compositionally biased region" description="Pro residues" evidence="2">
    <location>
        <begin position="973"/>
        <end position="987"/>
    </location>
</feature>
<feature type="modified residue" description="N-acetylalanine" evidence="6">
    <location>
        <position position="2"/>
    </location>
</feature>
<feature type="modified residue" description="Phosphoserine" evidence="6">
    <location>
        <position position="13"/>
    </location>
</feature>
<feature type="modified residue" description="Phosphoserine" evidence="1">
    <location>
        <position position="478"/>
    </location>
</feature>
<feature type="modified residue" description="Phosphoserine" evidence="1">
    <location>
        <position position="482"/>
    </location>
</feature>
<feature type="modified residue" description="Phosphothreonine" evidence="1">
    <location>
        <position position="751"/>
    </location>
</feature>
<feature type="modified residue" description="Phosphoserine" evidence="7">
    <location>
        <position position="755"/>
    </location>
</feature>
<feature type="modified residue" description="Phosphoserine" evidence="1">
    <location>
        <position position="1029"/>
    </location>
</feature>
<feature type="modified residue" description="Phosphoserine" evidence="1">
    <location>
        <position position="1039"/>
    </location>
</feature>
<feature type="sequence conflict" description="In Ref. 3; AAH16444/AAH57987." evidence="5" ref="3">
    <original>L</original>
    <variation>P</variation>
    <location>
        <position position="566"/>
    </location>
</feature>
<feature type="sequence conflict" description="In Ref. 1; BAB23754." evidence="5" ref="1">
    <original>Q</original>
    <variation>L</variation>
    <location>
        <position position="864"/>
    </location>
</feature>